<reference key="1">
    <citation type="journal article" date="2009" name="Nature">
        <title>Evolution of pathogenicity and sexual reproduction in eight Candida genomes.</title>
        <authorList>
            <person name="Butler G."/>
            <person name="Rasmussen M.D."/>
            <person name="Lin M.F."/>
            <person name="Santos M.A.S."/>
            <person name="Sakthikumar S."/>
            <person name="Munro C.A."/>
            <person name="Rheinbay E."/>
            <person name="Grabherr M."/>
            <person name="Forche A."/>
            <person name="Reedy J.L."/>
            <person name="Agrafioti I."/>
            <person name="Arnaud M.B."/>
            <person name="Bates S."/>
            <person name="Brown A.J.P."/>
            <person name="Brunke S."/>
            <person name="Costanzo M.C."/>
            <person name="Fitzpatrick D.A."/>
            <person name="de Groot P.W.J."/>
            <person name="Harris D."/>
            <person name="Hoyer L.L."/>
            <person name="Hube B."/>
            <person name="Klis F.M."/>
            <person name="Kodira C."/>
            <person name="Lennard N."/>
            <person name="Logue M.E."/>
            <person name="Martin R."/>
            <person name="Neiman A.M."/>
            <person name="Nikolaou E."/>
            <person name="Quail M.A."/>
            <person name="Quinn J."/>
            <person name="Santos M.C."/>
            <person name="Schmitzberger F.F."/>
            <person name="Sherlock G."/>
            <person name="Shah P."/>
            <person name="Silverstein K.A.T."/>
            <person name="Skrzypek M.S."/>
            <person name="Soll D."/>
            <person name="Staggs R."/>
            <person name="Stansfield I."/>
            <person name="Stumpf M.P.H."/>
            <person name="Sudbery P.E."/>
            <person name="Srikantha T."/>
            <person name="Zeng Q."/>
            <person name="Berman J."/>
            <person name="Berriman M."/>
            <person name="Heitman J."/>
            <person name="Gow N.A.R."/>
            <person name="Lorenz M.C."/>
            <person name="Birren B.W."/>
            <person name="Kellis M."/>
            <person name="Cuomo C.A."/>
        </authorList>
    </citation>
    <scope>NUCLEOTIDE SEQUENCE [LARGE SCALE GENOMIC DNA]</scope>
    <source>
        <strain>ATCC MYA-3404 / T1</strain>
    </source>
</reference>
<dbReference type="EC" id="3.4.21.89" evidence="1"/>
<dbReference type="EMBL" id="GG692395">
    <property type="protein sequence ID" value="EER36246.1"/>
    <property type="molecule type" value="Genomic_DNA"/>
</dbReference>
<dbReference type="RefSeq" id="XP_002546204.1">
    <property type="nucleotide sequence ID" value="XM_002546158.1"/>
</dbReference>
<dbReference type="SMR" id="C5M4J6"/>
<dbReference type="STRING" id="294747.C5M4J6"/>
<dbReference type="MEROPS" id="S26.010"/>
<dbReference type="EnsemblFungi" id="CTRG_00986-t43_1">
    <property type="protein sequence ID" value="CTRG_00986-t43_1-p1"/>
    <property type="gene ID" value="CTRG_00986"/>
</dbReference>
<dbReference type="GeneID" id="8302147"/>
<dbReference type="KEGG" id="ctp:CTRG_00986"/>
<dbReference type="VEuPathDB" id="FungiDB:CTRG_00986"/>
<dbReference type="eggNOG" id="KOG3342">
    <property type="taxonomic scope" value="Eukaryota"/>
</dbReference>
<dbReference type="HOGENOM" id="CLU_089996_0_1_1"/>
<dbReference type="OrthoDB" id="10257561at2759"/>
<dbReference type="Proteomes" id="UP000002037">
    <property type="component" value="Unassembled WGS sequence"/>
</dbReference>
<dbReference type="GO" id="GO:0005787">
    <property type="term" value="C:signal peptidase complex"/>
    <property type="evidence" value="ECO:0007669"/>
    <property type="project" value="EnsemblFungi"/>
</dbReference>
<dbReference type="GO" id="GO:0004252">
    <property type="term" value="F:serine-type endopeptidase activity"/>
    <property type="evidence" value="ECO:0007669"/>
    <property type="project" value="UniProtKB-EC"/>
</dbReference>
<dbReference type="GO" id="GO:0045047">
    <property type="term" value="P:protein targeting to ER"/>
    <property type="evidence" value="ECO:0007669"/>
    <property type="project" value="EnsemblFungi"/>
</dbReference>
<dbReference type="GO" id="GO:0006465">
    <property type="term" value="P:signal peptide processing"/>
    <property type="evidence" value="ECO:0007669"/>
    <property type="project" value="EnsemblFungi"/>
</dbReference>
<dbReference type="CDD" id="cd06530">
    <property type="entry name" value="S26_SPase_I"/>
    <property type="match status" value="1"/>
</dbReference>
<dbReference type="InterPro" id="IPR036286">
    <property type="entry name" value="LexA/Signal_pep-like_sf"/>
</dbReference>
<dbReference type="InterPro" id="IPR019756">
    <property type="entry name" value="Pept_S26A_signal_pept_1_Ser-AS"/>
</dbReference>
<dbReference type="InterPro" id="IPR015927">
    <property type="entry name" value="Peptidase_S24_S26A/B/C"/>
</dbReference>
<dbReference type="InterPro" id="IPR019533">
    <property type="entry name" value="Peptidase_S26"/>
</dbReference>
<dbReference type="InterPro" id="IPR001733">
    <property type="entry name" value="Peptidase_S26B"/>
</dbReference>
<dbReference type="NCBIfam" id="TIGR02228">
    <property type="entry name" value="sigpep_I_arch"/>
    <property type="match status" value="1"/>
</dbReference>
<dbReference type="PANTHER" id="PTHR10806">
    <property type="entry name" value="SIGNAL PEPTIDASE COMPLEX CATALYTIC SUBUNIT SEC11"/>
    <property type="match status" value="1"/>
</dbReference>
<dbReference type="PANTHER" id="PTHR10806:SF6">
    <property type="entry name" value="SIGNAL PEPTIDASE COMPLEX CATALYTIC SUBUNIT SEC11"/>
    <property type="match status" value="1"/>
</dbReference>
<dbReference type="Pfam" id="PF00717">
    <property type="entry name" value="Peptidase_S24"/>
    <property type="match status" value="1"/>
</dbReference>
<dbReference type="PRINTS" id="PR00728">
    <property type="entry name" value="SIGNALPTASE"/>
</dbReference>
<dbReference type="SUPFAM" id="SSF51306">
    <property type="entry name" value="LexA/Signal peptidase"/>
    <property type="match status" value="1"/>
</dbReference>
<dbReference type="PROSITE" id="PS00501">
    <property type="entry name" value="SPASE_I_1"/>
    <property type="match status" value="1"/>
</dbReference>
<dbReference type="PROSITE" id="PS00761">
    <property type="entry name" value="SPASE_I_3"/>
    <property type="match status" value="1"/>
</dbReference>
<proteinExistence type="inferred from homology"/>
<accession>C5M4J6</accession>
<feature type="chain" id="PRO_0000412322" description="Signal peptidase complex catalytic subunit SEC11">
    <location>
        <begin position="1"/>
        <end position="166"/>
    </location>
</feature>
<feature type="topological domain" description="Cytoplasmic" evidence="3">
    <location>
        <begin position="1"/>
        <end position="9"/>
    </location>
</feature>
<feature type="transmembrane region" description="Helical; Signal-anchor for type II membrane protein" evidence="3">
    <location>
        <begin position="10"/>
        <end position="30"/>
    </location>
</feature>
<feature type="topological domain" description="Lumenal" evidence="3">
    <location>
        <begin position="31"/>
        <end position="166"/>
    </location>
</feature>
<feature type="region of interest" description="C-terminal short (CTS) helix" evidence="2">
    <location>
        <begin position="152"/>
        <end position="163"/>
    </location>
</feature>
<feature type="active site" description="Charge relay system" evidence="1">
    <location>
        <position position="44"/>
    </location>
</feature>
<feature type="active site" description="Charge relay system" evidence="1">
    <location>
        <position position="83"/>
    </location>
</feature>
<feature type="active site" description="Charge relay system" evidence="1">
    <location>
        <position position="108"/>
    </location>
</feature>
<organism>
    <name type="scientific">Candida tropicalis (strain ATCC MYA-3404 / T1)</name>
    <name type="common">Yeast</name>
    <dbReference type="NCBI Taxonomy" id="294747"/>
    <lineage>
        <taxon>Eukaryota</taxon>
        <taxon>Fungi</taxon>
        <taxon>Dikarya</taxon>
        <taxon>Ascomycota</taxon>
        <taxon>Saccharomycotina</taxon>
        <taxon>Pichiomycetes</taxon>
        <taxon>Debaryomycetaceae</taxon>
        <taxon>Candida/Lodderomyces clade</taxon>
        <taxon>Candida</taxon>
    </lineage>
</organism>
<keyword id="KW-0256">Endoplasmic reticulum</keyword>
<keyword id="KW-0378">Hydrolase</keyword>
<keyword id="KW-0472">Membrane</keyword>
<keyword id="KW-0645">Protease</keyword>
<keyword id="KW-1185">Reference proteome</keyword>
<keyword id="KW-0735">Signal-anchor</keyword>
<keyword id="KW-0812">Transmembrane</keyword>
<keyword id="KW-1133">Transmembrane helix</keyword>
<evidence type="ECO:0000250" key="1">
    <source>
        <dbReference type="UniProtKB" id="P15367"/>
    </source>
</evidence>
<evidence type="ECO:0000250" key="2">
    <source>
        <dbReference type="UniProtKB" id="P67812"/>
    </source>
</evidence>
<evidence type="ECO:0000255" key="3"/>
<evidence type="ECO:0000305" key="4"/>
<name>SEC11_CANTT</name>
<protein>
    <recommendedName>
        <fullName>Signal peptidase complex catalytic subunit SEC11</fullName>
        <ecNumber evidence="1">3.4.21.89</ecNumber>
    </recommendedName>
    <alternativeName>
        <fullName>Signal peptidase I</fullName>
    </alternativeName>
</protein>
<gene>
    <name type="primary">SEC11</name>
    <name type="ORF">CTRG_00986</name>
</gene>
<sequence>MNLRQQITQFLTLAYVFSSAFMLWKTLSVIANSHSPIVVVLSGSMEPAFQRGDILFLWNRENRQKVGDIVVYEIDGKSIPIVHRVLREHHNNEKQLLLTKGDNNAVDDLSLYAKKQQYLNQKEDLVGTVKGYLPFIGYVTILISENVYFKYGMLGLLGLSALFSNE</sequence>
<comment type="function">
    <text evidence="1 2">Catalytic component of the signal peptidase complex (SPC) which catalyzes the cleavage of N-terminal signal sequences from nascent proteins as they are translocated into the lumen of the endoplasmic reticulum (By similarity). Specifically cleaves N-terminal signal peptides that contain a hydrophobic alpha-helix (h-region) shorter than 18-20 amino acids (By similarity).</text>
</comment>
<comment type="catalytic activity">
    <reaction evidence="1">
        <text>Cleavage of hydrophobic, N-terminal signal or leader sequences from secreted and periplasmic proteins.</text>
        <dbReference type="EC" id="3.4.21.89"/>
    </reaction>
</comment>
<comment type="subunit">
    <text evidence="1 2">Component of the signal peptidase complex (SPC) composed of a catalytic subunit SEC11 and three accessory subunits SPC1, SPC2 and SPC3 (By similarity). The complex induces a local thinning of the ER membrane which is used to measure the length of the signal peptide (SP) h-region of protein substrates. This ensures the selectivity of the complex towards h-regions shorter than 18-20 amino acids (By similarity). SPC associates with the translocon complex (By similarity).</text>
</comment>
<comment type="subcellular location">
    <subcellularLocation>
        <location evidence="1">Endoplasmic reticulum membrane</location>
        <topology evidence="1">Single-pass type II membrane protein</topology>
    </subcellularLocation>
</comment>
<comment type="domain">
    <text evidence="2">The C-terminal short (CTS) helix is essential for catalytic activity. It may be accommodated as a transmembrane helix in the thinned membrane environment of the complex, similarly to the signal peptide in the complex substrates.</text>
</comment>
<comment type="similarity">
    <text evidence="4">Belongs to the peptidase S26B family.</text>
</comment>